<organism>
    <name type="scientific">Homo sapiens</name>
    <name type="common">Human</name>
    <dbReference type="NCBI Taxonomy" id="9606"/>
    <lineage>
        <taxon>Eukaryota</taxon>
        <taxon>Metazoa</taxon>
        <taxon>Chordata</taxon>
        <taxon>Craniata</taxon>
        <taxon>Vertebrata</taxon>
        <taxon>Euteleostomi</taxon>
        <taxon>Mammalia</taxon>
        <taxon>Eutheria</taxon>
        <taxon>Euarchontoglires</taxon>
        <taxon>Primates</taxon>
        <taxon>Haplorrhini</taxon>
        <taxon>Catarrhini</taxon>
        <taxon>Hominidae</taxon>
        <taxon>Homo</taxon>
    </lineage>
</organism>
<name>EVX1_HUMAN</name>
<proteinExistence type="evidence at protein level"/>
<protein>
    <recommendedName>
        <fullName>Homeobox even-skipped homolog protein 1</fullName>
    </recommendedName>
    <alternativeName>
        <fullName>EVX-1</fullName>
    </alternativeName>
</protein>
<feature type="chain" id="PRO_0000048870" description="Homeobox even-skipped homolog protein 1">
    <location>
        <begin position="1"/>
        <end position="407"/>
    </location>
</feature>
<feature type="DNA-binding region" description="Homeobox" evidence="1">
    <location>
        <begin position="183"/>
        <end position="242"/>
    </location>
</feature>
<feature type="region of interest" description="Disordered" evidence="2">
    <location>
        <begin position="29"/>
        <end position="120"/>
    </location>
</feature>
<feature type="region of interest" description="Disordered" evidence="2">
    <location>
        <begin position="137"/>
        <end position="179"/>
    </location>
</feature>
<feature type="compositionally biased region" description="Polar residues" evidence="2">
    <location>
        <begin position="102"/>
        <end position="114"/>
    </location>
</feature>
<feature type="splice variant" id="VSP_056502" description="In isoform 2." evidence="3">
    <location>
        <begin position="1"/>
        <end position="182"/>
    </location>
</feature>
<gene>
    <name type="primary">EVX1</name>
</gene>
<evidence type="ECO:0000255" key="1">
    <source>
        <dbReference type="PROSITE-ProRule" id="PRU00108"/>
    </source>
</evidence>
<evidence type="ECO:0000256" key="2">
    <source>
        <dbReference type="SAM" id="MobiDB-lite"/>
    </source>
</evidence>
<evidence type="ECO:0000303" key="3">
    <source>
    </source>
</evidence>
<evidence type="ECO:0000305" key="4"/>
<accession>P49640</accession>
<accession>A4D199</accession>
<accession>B4DQJ0</accession>
<reference key="1">
    <citation type="journal article" date="1991" name="Nucleic Acids Res.">
        <title>Isolation and mapping of EVX1, a human homeobox gene homologous to even-skipped, localized at the 5' end of HOX1 locus on chromosome 7.</title>
        <authorList>
            <person name="Faiella A."/>
            <person name="D'Esposito M."/>
            <person name="Rambaldi M."/>
            <person name="Acampora D."/>
            <person name="Balsofiore S."/>
            <person name="Stornaiuolo A."/>
            <person name="Mallamaci M."/>
            <person name="Migliaccio E."/>
            <person name="Gulisano M."/>
        </authorList>
    </citation>
    <scope>NUCLEOTIDE SEQUENCE [GENOMIC DNA / MRNA] (ISOFORM 1)</scope>
</reference>
<reference key="2">
    <citation type="journal article" date="1995" name="J. Biol. Chem.">
        <title>Transcriptional repression by the human homeobox protein EVX1 in transfected mammalian cells.</title>
        <authorList>
            <person name="Briata P."/>
            <person name="van de Werken R."/>
            <person name="Airoldi I."/>
            <person name="Ilengo C."/>
            <person name="di Blas E."/>
            <person name="Boncinelli E."/>
            <person name="Corte G."/>
        </authorList>
    </citation>
    <scope>NUCLEOTIDE SEQUENCE [MRNA] (ISOFORM 1)</scope>
</reference>
<reference key="3">
    <citation type="journal article" date="2004" name="Nat. Genet.">
        <title>Complete sequencing and characterization of 21,243 full-length human cDNAs.</title>
        <authorList>
            <person name="Ota T."/>
            <person name="Suzuki Y."/>
            <person name="Nishikawa T."/>
            <person name="Otsuki T."/>
            <person name="Sugiyama T."/>
            <person name="Irie R."/>
            <person name="Wakamatsu A."/>
            <person name="Hayashi K."/>
            <person name="Sato H."/>
            <person name="Nagai K."/>
            <person name="Kimura K."/>
            <person name="Makita H."/>
            <person name="Sekine M."/>
            <person name="Obayashi M."/>
            <person name="Nishi T."/>
            <person name="Shibahara T."/>
            <person name="Tanaka T."/>
            <person name="Ishii S."/>
            <person name="Yamamoto J."/>
            <person name="Saito K."/>
            <person name="Kawai Y."/>
            <person name="Isono Y."/>
            <person name="Nakamura Y."/>
            <person name="Nagahari K."/>
            <person name="Murakami K."/>
            <person name="Yasuda T."/>
            <person name="Iwayanagi T."/>
            <person name="Wagatsuma M."/>
            <person name="Shiratori A."/>
            <person name="Sudo H."/>
            <person name="Hosoiri T."/>
            <person name="Kaku Y."/>
            <person name="Kodaira H."/>
            <person name="Kondo H."/>
            <person name="Sugawara M."/>
            <person name="Takahashi M."/>
            <person name="Kanda K."/>
            <person name="Yokoi T."/>
            <person name="Furuya T."/>
            <person name="Kikkawa E."/>
            <person name="Omura Y."/>
            <person name="Abe K."/>
            <person name="Kamihara K."/>
            <person name="Katsuta N."/>
            <person name="Sato K."/>
            <person name="Tanikawa M."/>
            <person name="Yamazaki M."/>
            <person name="Ninomiya K."/>
            <person name="Ishibashi T."/>
            <person name="Yamashita H."/>
            <person name="Murakawa K."/>
            <person name="Fujimori K."/>
            <person name="Tanai H."/>
            <person name="Kimata M."/>
            <person name="Watanabe M."/>
            <person name="Hiraoka S."/>
            <person name="Chiba Y."/>
            <person name="Ishida S."/>
            <person name="Ono Y."/>
            <person name="Takiguchi S."/>
            <person name="Watanabe S."/>
            <person name="Yosida M."/>
            <person name="Hotuta T."/>
            <person name="Kusano J."/>
            <person name="Kanehori K."/>
            <person name="Takahashi-Fujii A."/>
            <person name="Hara H."/>
            <person name="Tanase T.-O."/>
            <person name="Nomura Y."/>
            <person name="Togiya S."/>
            <person name="Komai F."/>
            <person name="Hara R."/>
            <person name="Takeuchi K."/>
            <person name="Arita M."/>
            <person name="Imose N."/>
            <person name="Musashino K."/>
            <person name="Yuuki H."/>
            <person name="Oshima A."/>
            <person name="Sasaki N."/>
            <person name="Aotsuka S."/>
            <person name="Yoshikawa Y."/>
            <person name="Matsunawa H."/>
            <person name="Ichihara T."/>
            <person name="Shiohata N."/>
            <person name="Sano S."/>
            <person name="Moriya S."/>
            <person name="Momiyama H."/>
            <person name="Satoh N."/>
            <person name="Takami S."/>
            <person name="Terashima Y."/>
            <person name="Suzuki O."/>
            <person name="Nakagawa S."/>
            <person name="Senoh A."/>
            <person name="Mizoguchi H."/>
            <person name="Goto Y."/>
            <person name="Shimizu F."/>
            <person name="Wakebe H."/>
            <person name="Hishigaki H."/>
            <person name="Watanabe T."/>
            <person name="Sugiyama A."/>
            <person name="Takemoto M."/>
            <person name="Kawakami B."/>
            <person name="Yamazaki M."/>
            <person name="Watanabe K."/>
            <person name="Kumagai A."/>
            <person name="Itakura S."/>
            <person name="Fukuzumi Y."/>
            <person name="Fujimori Y."/>
            <person name="Komiyama M."/>
            <person name="Tashiro H."/>
            <person name="Tanigami A."/>
            <person name="Fujiwara T."/>
            <person name="Ono T."/>
            <person name="Yamada K."/>
            <person name="Fujii Y."/>
            <person name="Ozaki K."/>
            <person name="Hirao M."/>
            <person name="Ohmori Y."/>
            <person name="Kawabata A."/>
            <person name="Hikiji T."/>
            <person name="Kobatake N."/>
            <person name="Inagaki H."/>
            <person name="Ikema Y."/>
            <person name="Okamoto S."/>
            <person name="Okitani R."/>
            <person name="Kawakami T."/>
            <person name="Noguchi S."/>
            <person name="Itoh T."/>
            <person name="Shigeta K."/>
            <person name="Senba T."/>
            <person name="Matsumura K."/>
            <person name="Nakajima Y."/>
            <person name="Mizuno T."/>
            <person name="Morinaga M."/>
            <person name="Sasaki M."/>
            <person name="Togashi T."/>
            <person name="Oyama M."/>
            <person name="Hata H."/>
            <person name="Watanabe M."/>
            <person name="Komatsu T."/>
            <person name="Mizushima-Sugano J."/>
            <person name="Satoh T."/>
            <person name="Shirai Y."/>
            <person name="Takahashi Y."/>
            <person name="Nakagawa K."/>
            <person name="Okumura K."/>
            <person name="Nagase T."/>
            <person name="Nomura N."/>
            <person name="Kikuchi H."/>
            <person name="Masuho Y."/>
            <person name="Yamashita R."/>
            <person name="Nakai K."/>
            <person name="Yada T."/>
            <person name="Nakamura Y."/>
            <person name="Ohara O."/>
            <person name="Isogai T."/>
            <person name="Sugano S."/>
        </authorList>
    </citation>
    <scope>NUCLEOTIDE SEQUENCE [LARGE SCALE MRNA] (ISOFORM 2)</scope>
</reference>
<reference key="4">
    <citation type="journal article" date="2003" name="Nature">
        <title>The DNA sequence of human chromosome 7.</title>
        <authorList>
            <person name="Hillier L.W."/>
            <person name="Fulton R.S."/>
            <person name="Fulton L.A."/>
            <person name="Graves T.A."/>
            <person name="Pepin K.H."/>
            <person name="Wagner-McPherson C."/>
            <person name="Layman D."/>
            <person name="Maas J."/>
            <person name="Jaeger S."/>
            <person name="Walker R."/>
            <person name="Wylie K."/>
            <person name="Sekhon M."/>
            <person name="Becker M.C."/>
            <person name="O'Laughlin M.D."/>
            <person name="Schaller M.E."/>
            <person name="Fewell G.A."/>
            <person name="Delehaunty K.D."/>
            <person name="Miner T.L."/>
            <person name="Nash W.E."/>
            <person name="Cordes M."/>
            <person name="Du H."/>
            <person name="Sun H."/>
            <person name="Edwards J."/>
            <person name="Bradshaw-Cordum H."/>
            <person name="Ali J."/>
            <person name="Andrews S."/>
            <person name="Isak A."/>
            <person name="Vanbrunt A."/>
            <person name="Nguyen C."/>
            <person name="Du F."/>
            <person name="Lamar B."/>
            <person name="Courtney L."/>
            <person name="Kalicki J."/>
            <person name="Ozersky P."/>
            <person name="Bielicki L."/>
            <person name="Scott K."/>
            <person name="Holmes A."/>
            <person name="Harkins R."/>
            <person name="Harris A."/>
            <person name="Strong C.M."/>
            <person name="Hou S."/>
            <person name="Tomlinson C."/>
            <person name="Dauphin-Kohlberg S."/>
            <person name="Kozlowicz-Reilly A."/>
            <person name="Leonard S."/>
            <person name="Rohlfing T."/>
            <person name="Rock S.M."/>
            <person name="Tin-Wollam A.-M."/>
            <person name="Abbott A."/>
            <person name="Minx P."/>
            <person name="Maupin R."/>
            <person name="Strowmatt C."/>
            <person name="Latreille P."/>
            <person name="Miller N."/>
            <person name="Johnson D."/>
            <person name="Murray J."/>
            <person name="Woessner J.P."/>
            <person name="Wendl M.C."/>
            <person name="Yang S.-P."/>
            <person name="Schultz B.R."/>
            <person name="Wallis J.W."/>
            <person name="Spieth J."/>
            <person name="Bieri T.A."/>
            <person name="Nelson J.O."/>
            <person name="Berkowicz N."/>
            <person name="Wohldmann P.E."/>
            <person name="Cook L.L."/>
            <person name="Hickenbotham M.T."/>
            <person name="Eldred J."/>
            <person name="Williams D."/>
            <person name="Bedell J.A."/>
            <person name="Mardis E.R."/>
            <person name="Clifton S.W."/>
            <person name="Chissoe S.L."/>
            <person name="Marra M.A."/>
            <person name="Raymond C."/>
            <person name="Haugen E."/>
            <person name="Gillett W."/>
            <person name="Zhou Y."/>
            <person name="James R."/>
            <person name="Phelps K."/>
            <person name="Iadanoto S."/>
            <person name="Bubb K."/>
            <person name="Simms E."/>
            <person name="Levy R."/>
            <person name="Clendenning J."/>
            <person name="Kaul R."/>
            <person name="Kent W.J."/>
            <person name="Furey T.S."/>
            <person name="Baertsch R.A."/>
            <person name="Brent M.R."/>
            <person name="Keibler E."/>
            <person name="Flicek P."/>
            <person name="Bork P."/>
            <person name="Suyama M."/>
            <person name="Bailey J.A."/>
            <person name="Portnoy M.E."/>
            <person name="Torrents D."/>
            <person name="Chinwalla A.T."/>
            <person name="Gish W.R."/>
            <person name="Eddy S.R."/>
            <person name="McPherson J.D."/>
            <person name="Olson M.V."/>
            <person name="Eichler E.E."/>
            <person name="Green E.D."/>
            <person name="Waterston R.H."/>
            <person name="Wilson R.K."/>
        </authorList>
    </citation>
    <scope>NUCLEOTIDE SEQUENCE [LARGE SCALE GENOMIC DNA]</scope>
</reference>
<reference key="5">
    <citation type="submission" date="2005-07" db="EMBL/GenBank/DDBJ databases">
        <authorList>
            <person name="Mural R.J."/>
            <person name="Istrail S."/>
            <person name="Sutton G.G."/>
            <person name="Florea L."/>
            <person name="Halpern A.L."/>
            <person name="Mobarry C.M."/>
            <person name="Lippert R."/>
            <person name="Walenz B."/>
            <person name="Shatkay H."/>
            <person name="Dew I."/>
            <person name="Miller J.R."/>
            <person name="Flanigan M.J."/>
            <person name="Edwards N.J."/>
            <person name="Bolanos R."/>
            <person name="Fasulo D."/>
            <person name="Halldorsson B.V."/>
            <person name="Hannenhalli S."/>
            <person name="Turner R."/>
            <person name="Yooseph S."/>
            <person name="Lu F."/>
            <person name="Nusskern D.R."/>
            <person name="Shue B.C."/>
            <person name="Zheng X.H."/>
            <person name="Zhong F."/>
            <person name="Delcher A.L."/>
            <person name="Huson D.H."/>
            <person name="Kravitz S.A."/>
            <person name="Mouchard L."/>
            <person name="Reinert K."/>
            <person name="Remington K.A."/>
            <person name="Clark A.G."/>
            <person name="Waterman M.S."/>
            <person name="Eichler E.E."/>
            <person name="Adams M.D."/>
            <person name="Hunkapiller M.W."/>
            <person name="Myers E.W."/>
            <person name="Venter J.C."/>
        </authorList>
    </citation>
    <scope>NUCLEOTIDE SEQUENCE [LARGE SCALE GENOMIC DNA]</scope>
</reference>
<reference key="6">
    <citation type="journal article" date="2003" name="Science">
        <title>Human chromosome 7: DNA sequence and biology.</title>
        <authorList>
            <person name="Scherer S.W."/>
            <person name="Cheung J."/>
            <person name="MacDonald J.R."/>
            <person name="Osborne L.R."/>
            <person name="Nakabayashi K."/>
            <person name="Herbrick J.-A."/>
            <person name="Carson A.R."/>
            <person name="Parker-Katiraee L."/>
            <person name="Skaug J."/>
            <person name="Khaja R."/>
            <person name="Zhang J."/>
            <person name="Hudek A.K."/>
            <person name="Li M."/>
            <person name="Haddad M."/>
            <person name="Duggan G.E."/>
            <person name="Fernandez B.A."/>
            <person name="Kanematsu E."/>
            <person name="Gentles S."/>
            <person name="Christopoulos C.C."/>
            <person name="Choufani S."/>
            <person name="Kwasnicka D."/>
            <person name="Zheng X.H."/>
            <person name="Lai Z."/>
            <person name="Nusskern D.R."/>
            <person name="Zhang Q."/>
            <person name="Gu Z."/>
            <person name="Lu F."/>
            <person name="Zeesman S."/>
            <person name="Nowaczyk M.J."/>
            <person name="Teshima I."/>
            <person name="Chitayat D."/>
            <person name="Shuman C."/>
            <person name="Weksberg R."/>
            <person name="Zackai E.H."/>
            <person name="Grebe T.A."/>
            <person name="Cox S.R."/>
            <person name="Kirkpatrick S.J."/>
            <person name="Rahman N."/>
            <person name="Friedman J.M."/>
            <person name="Heng H.H.Q."/>
            <person name="Pelicci P.G."/>
            <person name="Lo-Coco F."/>
            <person name="Belloni E."/>
            <person name="Shaffer L.G."/>
            <person name="Pober B."/>
            <person name="Morton C.C."/>
            <person name="Gusella J.F."/>
            <person name="Bruns G.A.P."/>
            <person name="Korf B.R."/>
            <person name="Quade B.J."/>
            <person name="Ligon A.H."/>
            <person name="Ferguson H."/>
            <person name="Higgins A.W."/>
            <person name="Leach N.T."/>
            <person name="Herrick S.R."/>
            <person name="Lemyre E."/>
            <person name="Farra C.G."/>
            <person name="Kim H.-G."/>
            <person name="Summers A.M."/>
            <person name="Gripp K.W."/>
            <person name="Roberts W."/>
            <person name="Szatmari P."/>
            <person name="Winsor E.J.T."/>
            <person name="Grzeschik K.-H."/>
            <person name="Teebi A."/>
            <person name="Minassian B.A."/>
            <person name="Kere J."/>
            <person name="Armengol L."/>
            <person name="Pujana M.A."/>
            <person name="Estivill X."/>
            <person name="Wilson M.D."/>
            <person name="Koop B.F."/>
            <person name="Tosi S."/>
            <person name="Moore G.E."/>
            <person name="Boright A.P."/>
            <person name="Zlotorynski E."/>
            <person name="Kerem B."/>
            <person name="Kroisel P.M."/>
            <person name="Petek E."/>
            <person name="Oscier D.G."/>
            <person name="Mould S.J."/>
            <person name="Doehner H."/>
            <person name="Doehner K."/>
            <person name="Rommens J.M."/>
            <person name="Vincent J.B."/>
            <person name="Venter J.C."/>
            <person name="Li P.W."/>
            <person name="Mural R.J."/>
            <person name="Adams M.D."/>
            <person name="Tsui L.-C."/>
        </authorList>
    </citation>
    <scope>NUCLEOTIDE SEQUENCE [LARGE SCALE GENOMIC DNA]</scope>
</reference>
<dbReference type="EMBL" id="X60655">
    <property type="protein sequence ID" value="CAA43062.1"/>
    <property type="molecule type" value="mRNA"/>
</dbReference>
<dbReference type="EMBL" id="U68782">
    <property type="protein sequence ID" value="AAB07598.1"/>
    <property type="molecule type" value="Genomic_DNA"/>
</dbReference>
<dbReference type="EMBL" id="U68781">
    <property type="protein sequence ID" value="AAB07598.1"/>
    <property type="status" value="JOINED"/>
    <property type="molecule type" value="Genomic_DNA"/>
</dbReference>
<dbReference type="EMBL" id="AK298822">
    <property type="protein sequence ID" value="BAG60952.1"/>
    <property type="molecule type" value="mRNA"/>
</dbReference>
<dbReference type="EMBL" id="AC004080">
    <property type="status" value="NOT_ANNOTATED_CDS"/>
    <property type="molecule type" value="Genomic_DNA"/>
</dbReference>
<dbReference type="EMBL" id="CH471073">
    <property type="protein sequence ID" value="EAW93892.1"/>
    <property type="molecule type" value="Genomic_DNA"/>
</dbReference>
<dbReference type="EMBL" id="CH236948">
    <property type="protein sequence ID" value="EAL24216.1"/>
    <property type="molecule type" value="Genomic_DNA"/>
</dbReference>
<dbReference type="CCDS" id="CCDS5413.1">
    <molecule id="P49640-1"/>
</dbReference>
<dbReference type="PIR" id="S22586">
    <property type="entry name" value="S22586"/>
</dbReference>
<dbReference type="RefSeq" id="NP_001291448.1">
    <molecule id="P49640-2"/>
    <property type="nucleotide sequence ID" value="NM_001304519.2"/>
</dbReference>
<dbReference type="RefSeq" id="NP_001291449.1">
    <molecule id="P49640-2"/>
    <property type="nucleotide sequence ID" value="NM_001304520.2"/>
</dbReference>
<dbReference type="RefSeq" id="NP_001980.1">
    <molecule id="P49640-1"/>
    <property type="nucleotide sequence ID" value="NM_001989.5"/>
</dbReference>
<dbReference type="SMR" id="P49640"/>
<dbReference type="BioGRID" id="108429">
    <property type="interactions" value="1"/>
</dbReference>
<dbReference type="FunCoup" id="P49640">
    <property type="interactions" value="1225"/>
</dbReference>
<dbReference type="STRING" id="9606.ENSP00000419266"/>
<dbReference type="BioMuta" id="EVX1"/>
<dbReference type="DMDM" id="1352398"/>
<dbReference type="jPOST" id="P49640"/>
<dbReference type="MassIVE" id="P49640"/>
<dbReference type="PaxDb" id="9606-ENSP00000419266"/>
<dbReference type="PeptideAtlas" id="P49640"/>
<dbReference type="ProteomicsDB" id="4881"/>
<dbReference type="ProteomicsDB" id="56036">
    <molecule id="P49640-1"/>
</dbReference>
<dbReference type="Antibodypedia" id="12413">
    <property type="antibodies" value="174 antibodies from 21 providers"/>
</dbReference>
<dbReference type="DNASU" id="2128"/>
<dbReference type="Ensembl" id="ENST00000496902.7">
    <molecule id="P49640-1"/>
    <property type="protein sequence ID" value="ENSP00000419266.3"/>
    <property type="gene ID" value="ENSG00000106038.13"/>
</dbReference>
<dbReference type="GeneID" id="2128"/>
<dbReference type="KEGG" id="hsa:2128"/>
<dbReference type="MANE-Select" id="ENST00000496902.7">
    <property type="protein sequence ID" value="ENSP00000419266.3"/>
    <property type="RefSeq nucleotide sequence ID" value="NM_001989.5"/>
    <property type="RefSeq protein sequence ID" value="NP_001980.1"/>
</dbReference>
<dbReference type="UCSC" id="uc003szd.2">
    <molecule id="P49640-1"/>
    <property type="organism name" value="human"/>
</dbReference>
<dbReference type="AGR" id="HGNC:3506"/>
<dbReference type="CTD" id="2128"/>
<dbReference type="DisGeNET" id="2128"/>
<dbReference type="GeneCards" id="EVX1"/>
<dbReference type="HGNC" id="HGNC:3506">
    <property type="gene designation" value="EVX1"/>
</dbReference>
<dbReference type="HPA" id="ENSG00000106038">
    <property type="expression patterns" value="Tissue enhanced (adrenal gland, prostate, seminal vesicle, urinary bladder, vagina)"/>
</dbReference>
<dbReference type="MIM" id="142996">
    <property type="type" value="gene"/>
</dbReference>
<dbReference type="neXtProt" id="NX_P49640"/>
<dbReference type="OpenTargets" id="ENSG00000106038"/>
<dbReference type="PharmGKB" id="PA27919"/>
<dbReference type="VEuPathDB" id="HostDB:ENSG00000106038"/>
<dbReference type="eggNOG" id="KOG0844">
    <property type="taxonomic scope" value="Eukaryota"/>
</dbReference>
<dbReference type="GeneTree" id="ENSGT00940000159854"/>
<dbReference type="HOGENOM" id="CLU_045075_1_0_1"/>
<dbReference type="InParanoid" id="P49640"/>
<dbReference type="OMA" id="NCISPRP"/>
<dbReference type="OrthoDB" id="6159439at2759"/>
<dbReference type="PAN-GO" id="P49640">
    <property type="GO annotations" value="4 GO annotations based on evolutionary models"/>
</dbReference>
<dbReference type="PhylomeDB" id="P49640"/>
<dbReference type="TreeFam" id="TF315938"/>
<dbReference type="PathwayCommons" id="P49640"/>
<dbReference type="SignaLink" id="P49640"/>
<dbReference type="SIGNOR" id="P49640"/>
<dbReference type="BioGRID-ORCS" id="2128">
    <property type="hits" value="15 hits in 1168 CRISPR screens"/>
</dbReference>
<dbReference type="ChiTaRS" id="EVX1">
    <property type="organism name" value="human"/>
</dbReference>
<dbReference type="GenomeRNAi" id="2128"/>
<dbReference type="Pharos" id="P49640">
    <property type="development level" value="Tbio"/>
</dbReference>
<dbReference type="PRO" id="PR:P49640"/>
<dbReference type="Proteomes" id="UP000005640">
    <property type="component" value="Chromosome 7"/>
</dbReference>
<dbReference type="RNAct" id="P49640">
    <property type="molecule type" value="protein"/>
</dbReference>
<dbReference type="Bgee" id="ENSG00000106038">
    <property type="expression patterns" value="Expressed in vena cava and 115 other cell types or tissues"/>
</dbReference>
<dbReference type="ExpressionAtlas" id="P49640">
    <property type="expression patterns" value="baseline and differential"/>
</dbReference>
<dbReference type="GO" id="GO:0030424">
    <property type="term" value="C:axon"/>
    <property type="evidence" value="ECO:0007669"/>
    <property type="project" value="Ensembl"/>
</dbReference>
<dbReference type="GO" id="GO:0000785">
    <property type="term" value="C:chromatin"/>
    <property type="evidence" value="ECO:0000247"/>
    <property type="project" value="NTNU_SB"/>
</dbReference>
<dbReference type="GO" id="GO:0043025">
    <property type="term" value="C:neuronal cell body"/>
    <property type="evidence" value="ECO:0007669"/>
    <property type="project" value="Ensembl"/>
</dbReference>
<dbReference type="GO" id="GO:0005654">
    <property type="term" value="C:nucleoplasm"/>
    <property type="evidence" value="ECO:0000314"/>
    <property type="project" value="HPA"/>
</dbReference>
<dbReference type="GO" id="GO:0005634">
    <property type="term" value="C:nucleus"/>
    <property type="evidence" value="ECO:0000318"/>
    <property type="project" value="GO_Central"/>
</dbReference>
<dbReference type="GO" id="GO:0003700">
    <property type="term" value="F:DNA-binding transcription factor activity"/>
    <property type="evidence" value="ECO:0000304"/>
    <property type="project" value="ProtInc"/>
</dbReference>
<dbReference type="GO" id="GO:0000981">
    <property type="term" value="F:DNA-binding transcription factor activity, RNA polymerase II-specific"/>
    <property type="evidence" value="ECO:0000247"/>
    <property type="project" value="NTNU_SB"/>
</dbReference>
<dbReference type="GO" id="GO:0000978">
    <property type="term" value="F:RNA polymerase II cis-regulatory region sequence-specific DNA binding"/>
    <property type="evidence" value="ECO:0000318"/>
    <property type="project" value="GO_Central"/>
</dbReference>
<dbReference type="GO" id="GO:1990837">
    <property type="term" value="F:sequence-specific double-stranded DNA binding"/>
    <property type="evidence" value="ECO:0000314"/>
    <property type="project" value="ARUK-UCL"/>
</dbReference>
<dbReference type="GO" id="GO:0009792">
    <property type="term" value="P:embryo development ending in birth or egg hatching"/>
    <property type="evidence" value="ECO:0007669"/>
    <property type="project" value="Ensembl"/>
</dbReference>
<dbReference type="GO" id="GO:1904936">
    <property type="term" value="P:interneuron migration"/>
    <property type="evidence" value="ECO:0007669"/>
    <property type="project" value="Ensembl"/>
</dbReference>
<dbReference type="GO" id="GO:0045944">
    <property type="term" value="P:positive regulation of transcription by RNA polymerase II"/>
    <property type="evidence" value="ECO:0007669"/>
    <property type="project" value="Ensembl"/>
</dbReference>
<dbReference type="GO" id="GO:0006357">
    <property type="term" value="P:regulation of transcription by RNA polymerase II"/>
    <property type="evidence" value="ECO:0000318"/>
    <property type="project" value="GO_Central"/>
</dbReference>
<dbReference type="GO" id="GO:0097377">
    <property type="term" value="P:spinal cord interneuron axon guidance"/>
    <property type="evidence" value="ECO:0007669"/>
    <property type="project" value="Ensembl"/>
</dbReference>
<dbReference type="CDD" id="cd00086">
    <property type="entry name" value="homeodomain"/>
    <property type="match status" value="1"/>
</dbReference>
<dbReference type="FunFam" id="1.10.10.60:FF:000256">
    <property type="entry name" value="Even-skipped homeobox 1"/>
    <property type="match status" value="1"/>
</dbReference>
<dbReference type="Gene3D" id="1.10.10.60">
    <property type="entry name" value="Homeodomain-like"/>
    <property type="match status" value="1"/>
</dbReference>
<dbReference type="InterPro" id="IPR052002">
    <property type="entry name" value="Even-skipped_HD"/>
</dbReference>
<dbReference type="InterPro" id="IPR001356">
    <property type="entry name" value="HD"/>
</dbReference>
<dbReference type="InterPro" id="IPR020479">
    <property type="entry name" value="HD_metazoa"/>
</dbReference>
<dbReference type="InterPro" id="IPR017970">
    <property type="entry name" value="Homeobox_CS"/>
</dbReference>
<dbReference type="InterPro" id="IPR009057">
    <property type="entry name" value="Homeodomain-like_sf"/>
</dbReference>
<dbReference type="PANTHER" id="PTHR46294:SF2">
    <property type="entry name" value="HOMEOBOX EVEN-SKIPPED HOMOLOG PROTEIN 1"/>
    <property type="match status" value="1"/>
</dbReference>
<dbReference type="PANTHER" id="PTHR46294">
    <property type="entry name" value="SEGMENTATION PROTEIN EVEN-SKIPPED"/>
    <property type="match status" value="1"/>
</dbReference>
<dbReference type="Pfam" id="PF00046">
    <property type="entry name" value="Homeodomain"/>
    <property type="match status" value="1"/>
</dbReference>
<dbReference type="PRINTS" id="PR00024">
    <property type="entry name" value="HOMEOBOX"/>
</dbReference>
<dbReference type="SMART" id="SM00389">
    <property type="entry name" value="HOX"/>
    <property type="match status" value="1"/>
</dbReference>
<dbReference type="SUPFAM" id="SSF46689">
    <property type="entry name" value="Homeodomain-like"/>
    <property type="match status" value="1"/>
</dbReference>
<dbReference type="PROSITE" id="PS00027">
    <property type="entry name" value="HOMEOBOX_1"/>
    <property type="match status" value="1"/>
</dbReference>
<dbReference type="PROSITE" id="PS50071">
    <property type="entry name" value="HOMEOBOX_2"/>
    <property type="match status" value="1"/>
</dbReference>
<comment type="function">
    <text>May play a role in the specification of neuronal cell types.</text>
</comment>
<comment type="subcellular location">
    <subcellularLocation>
        <location>Nucleus</location>
    </subcellularLocation>
</comment>
<comment type="alternative products">
    <event type="alternative splicing"/>
    <isoform>
        <id>P49640-1</id>
        <name>1</name>
        <sequence type="displayed"/>
    </isoform>
    <isoform>
        <id>P49640-2</id>
        <name>2</name>
        <sequence type="described" ref="VSP_056502"/>
    </isoform>
</comment>
<comment type="similarity">
    <text evidence="4">Belongs to the even-skipped homeobox family.</text>
</comment>
<keyword id="KW-0025">Alternative splicing</keyword>
<keyword id="KW-0217">Developmental protein</keyword>
<keyword id="KW-0238">DNA-binding</keyword>
<keyword id="KW-0371">Homeobox</keyword>
<keyword id="KW-0539">Nucleus</keyword>
<keyword id="KW-1267">Proteomics identification</keyword>
<keyword id="KW-1185">Reference proteome</keyword>
<sequence>MESRKDMVVFLDGGQLGTLVGKRVSNLSEAVGSPLPEPPEKMVPRGCLSPRAVPPATRERGGGGPEEEPVDGLAGSAAGPGAEPQVAGAAMLGPGPPAPSVDSLSGQGQPSSSDTESDFYEEIEVSCTPDCATGNAEYQHSKGSGSEALVGSPNGGSETPKSNGGSGGGGSQGTLACSASDQMRRYRTAFTREQIARLEKEFYRENYVSRPRRCELAAALNLPETTIKVWFQNRRMKDKRQRLAMTWPHPADPAFYTYMMSHAAAAGGLPYPFPSHLPLPYYSPVGLGAASAASAAASPFSGSLRPLDTFRVLSQPYPRPELLCAFRHPPLYPGPAHGLGASAGGPCSCLACHSGPANGLAPRAAAASDFTCASTSRSDSFLTFAPSVLSKASSVALDQREEVPLTR</sequence>